<proteinExistence type="evidence at transcript level"/>
<feature type="chain" id="PRO_0000310433" description="DDB1- and CUL4-associated factor 13">
    <location>
        <begin position="1"/>
        <end position="445"/>
    </location>
</feature>
<feature type="repeat" description="WD 1">
    <location>
        <begin position="64"/>
        <end position="104"/>
    </location>
</feature>
<feature type="repeat" description="WD 2">
    <location>
        <begin position="107"/>
        <end position="146"/>
    </location>
</feature>
<feature type="repeat" description="WD 3">
    <location>
        <begin position="152"/>
        <end position="191"/>
    </location>
</feature>
<feature type="repeat" description="WD 4">
    <location>
        <begin position="194"/>
        <end position="234"/>
    </location>
</feature>
<feature type="repeat" description="WD 5">
    <location>
        <begin position="236"/>
        <end position="276"/>
    </location>
</feature>
<feature type="repeat" description="WD 6">
    <location>
        <begin position="280"/>
        <end position="319"/>
    </location>
</feature>
<feature type="repeat" description="WD 7">
    <location>
        <begin position="323"/>
        <end position="362"/>
    </location>
</feature>
<feature type="region of interest" description="Required for nucleolar location" evidence="1">
    <location>
        <begin position="353"/>
        <end position="441"/>
    </location>
</feature>
<feature type="region of interest" description="Disordered" evidence="3">
    <location>
        <begin position="413"/>
        <end position="445"/>
    </location>
</feature>
<feature type="compositionally biased region" description="Basic residues" evidence="3">
    <location>
        <begin position="413"/>
        <end position="426"/>
    </location>
</feature>
<feature type="compositionally biased region" description="Basic residues" evidence="3">
    <location>
        <begin position="436"/>
        <end position="445"/>
    </location>
</feature>
<keyword id="KW-0539">Nucleus</keyword>
<keyword id="KW-1185">Reference proteome</keyword>
<keyword id="KW-0677">Repeat</keyword>
<keyword id="KW-0687">Ribonucleoprotein</keyword>
<keyword id="KW-0690">Ribosome biogenesis</keyword>
<keyword id="KW-0698">rRNA processing</keyword>
<keyword id="KW-0833">Ubl conjugation pathway</keyword>
<keyword id="KW-0853">WD repeat</keyword>
<evidence type="ECO:0000250" key="1">
    <source>
        <dbReference type="UniProtKB" id="Q6PAC3"/>
    </source>
</evidence>
<evidence type="ECO:0000250" key="2">
    <source>
        <dbReference type="UniProtKB" id="Q9NV06"/>
    </source>
</evidence>
<evidence type="ECO:0000256" key="3">
    <source>
        <dbReference type="SAM" id="MobiDB-lite"/>
    </source>
</evidence>
<evidence type="ECO:0000305" key="4"/>
<reference key="1">
    <citation type="submission" date="2003-01" db="EMBL/GenBank/DDBJ databases">
        <authorList>
            <consortium name="NIH - Xenopus Gene Collection (XGC) project"/>
        </authorList>
    </citation>
    <scope>NUCLEOTIDE SEQUENCE [LARGE SCALE MRNA]</scope>
    <source>
        <tissue>Embryo</tissue>
    </source>
</reference>
<organism>
    <name type="scientific">Xenopus laevis</name>
    <name type="common">African clawed frog</name>
    <dbReference type="NCBI Taxonomy" id="8355"/>
    <lineage>
        <taxon>Eukaryota</taxon>
        <taxon>Metazoa</taxon>
        <taxon>Chordata</taxon>
        <taxon>Craniata</taxon>
        <taxon>Vertebrata</taxon>
        <taxon>Euteleostomi</taxon>
        <taxon>Amphibia</taxon>
        <taxon>Batrachia</taxon>
        <taxon>Anura</taxon>
        <taxon>Pipoidea</taxon>
        <taxon>Pipidae</taxon>
        <taxon>Xenopodinae</taxon>
        <taxon>Xenopus</taxon>
        <taxon>Xenopus</taxon>
    </lineage>
</organism>
<sequence>MKVKVLCRNPDDYVRETKRDLQRVPRNYDPALHPFEVSREYTRALNATKLERVFAKPFIASLDGHRDGVNCIAKHPKSLSTVLSGACDGEVKIWNLTKRECSRTIQAHDGFVRGLCVRFCGTSFFTVGDDKTVKQWAMESPGYGEKVEPMRTILGKTVFTGIDHHVKDAVFATCGQQVDIWDEQRSAPMRSYAWGVDSISSVRFNPVETHILSSCGTDRSIVLYDKRKPTPLKKIILEMRTNALCWNPMEAFIFTAANENFNLYTYDMRYMDSPVKVHMDHVSAVLDVDYSPTGKELVSASFDKSIRIFPVQSGHSREVYHTKRMQHVTCVRWSADNKYVLCGSDEMNIRIWKANASEKLGVLSPRERAAQNYNQKLKEKFQHHPQIKRIARHRHLPRSIYSQIKEQQIMREARRKKDVNRRKHSKPGSVPIPSEKKKHVLAVVE</sequence>
<gene>
    <name type="primary">dcaf13</name>
    <name type="synonym">wdsof1</name>
</gene>
<protein>
    <recommendedName>
        <fullName>DDB1- and CUL4-associated factor 13</fullName>
    </recommendedName>
    <alternativeName>
        <fullName>WD repeat and SOF domain-containing protein 1</fullName>
    </alternativeName>
</protein>
<accession>Q7ZYQ6</accession>
<name>DCA13_XENLA</name>
<dbReference type="EMBL" id="BC042261">
    <property type="protein sequence ID" value="AAH42261.1"/>
    <property type="molecule type" value="mRNA"/>
</dbReference>
<dbReference type="RefSeq" id="NP_001080629.1">
    <property type="nucleotide sequence ID" value="NM_001087160.1"/>
</dbReference>
<dbReference type="SMR" id="Q7ZYQ6"/>
<dbReference type="DNASU" id="380321"/>
<dbReference type="AGR" id="Xenbase:XB-GENE-5791341"/>
<dbReference type="Xenbase" id="XB-GENE-5791341">
    <property type="gene designation" value="dcaf13.L"/>
</dbReference>
<dbReference type="OrthoDB" id="10249065at2759"/>
<dbReference type="UniPathway" id="UPA00143"/>
<dbReference type="Proteomes" id="UP000186698">
    <property type="component" value="Unplaced"/>
</dbReference>
<dbReference type="Bgee" id="380321">
    <property type="expression patterns" value="Expressed in testis and 19 other cell types or tissues"/>
</dbReference>
<dbReference type="GO" id="GO:0080008">
    <property type="term" value="C:Cul4-RING E3 ubiquitin ligase complex"/>
    <property type="evidence" value="ECO:0000250"/>
    <property type="project" value="UniProtKB"/>
</dbReference>
<dbReference type="GO" id="GO:0005730">
    <property type="term" value="C:nucleolus"/>
    <property type="evidence" value="ECO:0000250"/>
    <property type="project" value="UniProtKB"/>
</dbReference>
<dbReference type="GO" id="GO:0032040">
    <property type="term" value="C:small-subunit processome"/>
    <property type="evidence" value="ECO:0000318"/>
    <property type="project" value="GO_Central"/>
</dbReference>
<dbReference type="GO" id="GO:1990756">
    <property type="term" value="F:ubiquitin-like ligase-substrate adaptor activity"/>
    <property type="evidence" value="ECO:0000250"/>
    <property type="project" value="UniProtKB"/>
</dbReference>
<dbReference type="GO" id="GO:0000462">
    <property type="term" value="P:maturation of SSU-rRNA from tricistronic rRNA transcript (SSU-rRNA, 5.8S rRNA, LSU-rRNA)"/>
    <property type="evidence" value="ECO:0000318"/>
    <property type="project" value="GO_Central"/>
</dbReference>
<dbReference type="GO" id="GO:0001555">
    <property type="term" value="P:oocyte growth"/>
    <property type="evidence" value="ECO:0000250"/>
    <property type="project" value="UniProtKB"/>
</dbReference>
<dbReference type="GO" id="GO:0016567">
    <property type="term" value="P:protein ubiquitination"/>
    <property type="evidence" value="ECO:0007669"/>
    <property type="project" value="UniProtKB-UniPathway"/>
</dbReference>
<dbReference type="GO" id="GO:0006364">
    <property type="term" value="P:rRNA processing"/>
    <property type="evidence" value="ECO:0000250"/>
    <property type="project" value="UniProtKB"/>
</dbReference>
<dbReference type="CDD" id="cd00200">
    <property type="entry name" value="WD40"/>
    <property type="match status" value="1"/>
</dbReference>
<dbReference type="FunFam" id="2.130.10.10:FF:000132">
    <property type="entry name" value="DDB1- and CUL4-associated factor 13"/>
    <property type="match status" value="1"/>
</dbReference>
<dbReference type="FunFam" id="2.130.10.10:FF:000269">
    <property type="entry name" value="DDB1- and CUL4-associated factor 13"/>
    <property type="match status" value="1"/>
</dbReference>
<dbReference type="Gene3D" id="2.130.10.10">
    <property type="entry name" value="YVTN repeat-like/Quinoprotein amine dehydrogenase"/>
    <property type="match status" value="2"/>
</dbReference>
<dbReference type="InterPro" id="IPR007287">
    <property type="entry name" value="Sof1"/>
</dbReference>
<dbReference type="InterPro" id="IPR015943">
    <property type="entry name" value="WD40/YVTN_repeat-like_dom_sf"/>
</dbReference>
<dbReference type="InterPro" id="IPR019775">
    <property type="entry name" value="WD40_repeat_CS"/>
</dbReference>
<dbReference type="InterPro" id="IPR036322">
    <property type="entry name" value="WD40_repeat_dom_sf"/>
</dbReference>
<dbReference type="InterPro" id="IPR001680">
    <property type="entry name" value="WD40_rpt"/>
</dbReference>
<dbReference type="InterPro" id="IPR051733">
    <property type="entry name" value="WD_repeat_DCAF13/WDSOF1"/>
</dbReference>
<dbReference type="PANTHER" id="PTHR22851:SF0">
    <property type="entry name" value="DDB1- AND CUL4-ASSOCIATED FACTOR 13"/>
    <property type="match status" value="1"/>
</dbReference>
<dbReference type="PANTHER" id="PTHR22851">
    <property type="entry name" value="U3 SMALL NUCLEOLAR RNA U3 SNORNA ASSOCIATED PROTEIN"/>
    <property type="match status" value="1"/>
</dbReference>
<dbReference type="Pfam" id="PF04158">
    <property type="entry name" value="Sof1"/>
    <property type="match status" value="1"/>
</dbReference>
<dbReference type="Pfam" id="PF00400">
    <property type="entry name" value="WD40"/>
    <property type="match status" value="5"/>
</dbReference>
<dbReference type="SMART" id="SM00320">
    <property type="entry name" value="WD40"/>
    <property type="match status" value="5"/>
</dbReference>
<dbReference type="SUPFAM" id="SSF50978">
    <property type="entry name" value="WD40 repeat-like"/>
    <property type="match status" value="1"/>
</dbReference>
<dbReference type="PROSITE" id="PS00678">
    <property type="entry name" value="WD_REPEATS_1"/>
    <property type="match status" value="1"/>
</dbReference>
<dbReference type="PROSITE" id="PS50082">
    <property type="entry name" value="WD_REPEATS_2"/>
    <property type="match status" value="3"/>
</dbReference>
<dbReference type="PROSITE" id="PS50294">
    <property type="entry name" value="WD_REPEATS_REGION"/>
    <property type="match status" value="1"/>
</dbReference>
<comment type="function">
    <text evidence="2">Part of the small subunit (SSU) processome, first precursor of the small eukaryotic ribosomal subunit. During the assembly of the SSU processome in the nucleolus, many ribosome biogenesis factors, an RNA chaperone and ribosomal proteins associate with the nascent pre-rRNA and work in concert to generate RNA folding, modifications, rearrangements and cleavage as well as targeted degradation of pre-ribosomal RNA by the RNA exosome.</text>
</comment>
<comment type="function">
    <text evidence="2">Substrate-recognition component of a DCX (DDB1-CUL4-X-box) E3 ubiquitin-protein ligase complex.</text>
</comment>
<comment type="pathway">
    <text>Protein modification; protein ubiquitination.</text>
</comment>
<comment type="subunit">
    <text evidence="2">Part of the small subunit (SSU) processome, composed of more than 70 proteins and the RNA chaperone small nucleolar RNA (snoRNA) U3. Component of the DCX(DCAF13) E3 ubiquitin ligase complex, at least composed of CUL4 (CUL4A or CUL4B), DDB1, DCAF13 and RBX1.</text>
</comment>
<comment type="subcellular location">
    <subcellularLocation>
        <location evidence="2">Nucleus</location>
        <location evidence="2">Nucleolus</location>
    </subcellularLocation>
    <text evidence="2">In the nucleolus, localizes predominantly in the granular component, but also detected in the fibrillar center and dense fibrillar component.</text>
</comment>
<comment type="similarity">
    <text evidence="4">Belongs to the WD repeat DCAF13/WDSOF1 family.</text>
</comment>